<keyword id="KW-0028">Amino-acid biosynthesis</keyword>
<keyword id="KW-0032">Aminotransferase</keyword>
<keyword id="KW-0368">Histidine biosynthesis</keyword>
<keyword id="KW-0663">Pyridoxal phosphate</keyword>
<keyword id="KW-1185">Reference proteome</keyword>
<keyword id="KW-0808">Transferase</keyword>
<protein>
    <recommendedName>
        <fullName evidence="1">Histidinol-phosphate aminotransferase</fullName>
        <ecNumber evidence="1">2.6.1.9</ecNumber>
    </recommendedName>
    <alternativeName>
        <fullName evidence="1">Imidazole acetol-phosphate transaminase</fullName>
    </alternativeName>
</protein>
<name>HIS8_PELUB</name>
<comment type="catalytic activity">
    <reaction evidence="1">
        <text>L-histidinol phosphate + 2-oxoglutarate = 3-(imidazol-4-yl)-2-oxopropyl phosphate + L-glutamate</text>
        <dbReference type="Rhea" id="RHEA:23744"/>
        <dbReference type="ChEBI" id="CHEBI:16810"/>
        <dbReference type="ChEBI" id="CHEBI:29985"/>
        <dbReference type="ChEBI" id="CHEBI:57766"/>
        <dbReference type="ChEBI" id="CHEBI:57980"/>
        <dbReference type="EC" id="2.6.1.9"/>
    </reaction>
</comment>
<comment type="cofactor">
    <cofactor evidence="1">
        <name>pyridoxal 5'-phosphate</name>
        <dbReference type="ChEBI" id="CHEBI:597326"/>
    </cofactor>
</comment>
<comment type="pathway">
    <text evidence="1">Amino-acid biosynthesis; L-histidine biosynthesis; L-histidine from 5-phospho-alpha-D-ribose 1-diphosphate: step 7/9.</text>
</comment>
<comment type="subunit">
    <text evidence="1">Homodimer.</text>
</comment>
<comment type="similarity">
    <text evidence="1">Belongs to the class-II pyridoxal-phosphate-dependent aminotransferase family. Histidinol-phosphate aminotransferase subfamily.</text>
</comment>
<evidence type="ECO:0000255" key="1">
    <source>
        <dbReference type="HAMAP-Rule" id="MF_01023"/>
    </source>
</evidence>
<accession>Q4FP52</accession>
<reference key="1">
    <citation type="journal article" date="2005" name="Science">
        <title>Genome streamlining in a cosmopolitan oceanic bacterium.</title>
        <authorList>
            <person name="Giovannoni S.J."/>
            <person name="Tripp H.J."/>
            <person name="Givan S."/>
            <person name="Podar M."/>
            <person name="Vergin K.L."/>
            <person name="Baptista D."/>
            <person name="Bibbs L."/>
            <person name="Eads J."/>
            <person name="Richardson T.H."/>
            <person name="Noordewier M."/>
            <person name="Rappe M.S."/>
            <person name="Short J.M."/>
            <person name="Carrington J.C."/>
            <person name="Mathur E.J."/>
        </authorList>
    </citation>
    <scope>NUCLEOTIDE SEQUENCE [LARGE SCALE GENOMIC DNA]</scope>
    <source>
        <strain>HTCC1062</strain>
    </source>
</reference>
<proteinExistence type="inferred from homology"/>
<gene>
    <name evidence="1" type="primary">hisC</name>
    <name type="ordered locus">SAR11_0216</name>
</gene>
<sequence>MTVPKFKKFKIEAYKPGKSNIAKIRNIIKLSANESALGVSPRVKKILQNKKLLISKYPDGKAKNLRKEISKKFKCDFERIICGAGSDEIIQMICQLYLKPSDEVIVPQYSFLMYRIYAQIVGAKVVFSKEKNFKVSINEIIKKVTRKTKLVFIANPNNPTGTYLTRAELIDLRKKLNKNILLVLDDAYFEYMKNKDYKSGLDLFKNKDNVVVIRTFSKIYGLASLRVGWGHGPKKIISAMNLIRPPFNVNQVAQMAAIEALKDRKFINNSVKHNIREANKVRNALQKLKILSNEVTANFLLLNFDRCKFSANYIFNKLQSKGIILRSTEDGYNIKNKLRLTIGSTKENMRFITTIKAIFN</sequence>
<organism>
    <name type="scientific">Pelagibacter ubique (strain HTCC1062)</name>
    <dbReference type="NCBI Taxonomy" id="335992"/>
    <lineage>
        <taxon>Bacteria</taxon>
        <taxon>Pseudomonadati</taxon>
        <taxon>Pseudomonadota</taxon>
        <taxon>Alphaproteobacteria</taxon>
        <taxon>Candidatus Pelagibacterales</taxon>
        <taxon>Candidatus Pelagibacteraceae</taxon>
        <taxon>Candidatus Pelagibacter</taxon>
    </lineage>
</organism>
<feature type="chain" id="PRO_0000153412" description="Histidinol-phosphate aminotransferase">
    <location>
        <begin position="1"/>
        <end position="360"/>
    </location>
</feature>
<feature type="modified residue" description="N6-(pyridoxal phosphate)lysine" evidence="1">
    <location>
        <position position="218"/>
    </location>
</feature>
<dbReference type="EC" id="2.6.1.9" evidence="1"/>
<dbReference type="EMBL" id="CP000084">
    <property type="protein sequence ID" value="AAZ21037.1"/>
    <property type="molecule type" value="Genomic_DNA"/>
</dbReference>
<dbReference type="RefSeq" id="WP_006997694.1">
    <property type="nucleotide sequence ID" value="NC_007205.1"/>
</dbReference>
<dbReference type="SMR" id="Q4FP52"/>
<dbReference type="STRING" id="335992.SAR11_0216"/>
<dbReference type="GeneID" id="66294713"/>
<dbReference type="KEGG" id="pub:SAR11_0216"/>
<dbReference type="eggNOG" id="COG0079">
    <property type="taxonomic scope" value="Bacteria"/>
</dbReference>
<dbReference type="HOGENOM" id="CLU_017584_3_3_5"/>
<dbReference type="OrthoDB" id="9809616at2"/>
<dbReference type="UniPathway" id="UPA00031">
    <property type="reaction ID" value="UER00012"/>
</dbReference>
<dbReference type="Proteomes" id="UP000002528">
    <property type="component" value="Chromosome"/>
</dbReference>
<dbReference type="GO" id="GO:0004400">
    <property type="term" value="F:histidinol-phosphate transaminase activity"/>
    <property type="evidence" value="ECO:0007669"/>
    <property type="project" value="UniProtKB-UniRule"/>
</dbReference>
<dbReference type="GO" id="GO:0030170">
    <property type="term" value="F:pyridoxal phosphate binding"/>
    <property type="evidence" value="ECO:0007669"/>
    <property type="project" value="InterPro"/>
</dbReference>
<dbReference type="GO" id="GO:0000105">
    <property type="term" value="P:L-histidine biosynthetic process"/>
    <property type="evidence" value="ECO:0007669"/>
    <property type="project" value="UniProtKB-UniRule"/>
</dbReference>
<dbReference type="CDD" id="cd00609">
    <property type="entry name" value="AAT_like"/>
    <property type="match status" value="1"/>
</dbReference>
<dbReference type="Gene3D" id="3.90.1150.10">
    <property type="entry name" value="Aspartate Aminotransferase, domain 1"/>
    <property type="match status" value="1"/>
</dbReference>
<dbReference type="Gene3D" id="3.40.640.10">
    <property type="entry name" value="Type I PLP-dependent aspartate aminotransferase-like (Major domain)"/>
    <property type="match status" value="1"/>
</dbReference>
<dbReference type="HAMAP" id="MF_01023">
    <property type="entry name" value="HisC_aminotrans_2"/>
    <property type="match status" value="1"/>
</dbReference>
<dbReference type="InterPro" id="IPR004839">
    <property type="entry name" value="Aminotransferase_I/II_large"/>
</dbReference>
<dbReference type="InterPro" id="IPR005861">
    <property type="entry name" value="HisP_aminotrans"/>
</dbReference>
<dbReference type="InterPro" id="IPR050106">
    <property type="entry name" value="HistidinolP_aminotransfase"/>
</dbReference>
<dbReference type="InterPro" id="IPR015424">
    <property type="entry name" value="PyrdxlP-dep_Trfase"/>
</dbReference>
<dbReference type="InterPro" id="IPR015421">
    <property type="entry name" value="PyrdxlP-dep_Trfase_major"/>
</dbReference>
<dbReference type="InterPro" id="IPR015422">
    <property type="entry name" value="PyrdxlP-dep_Trfase_small"/>
</dbReference>
<dbReference type="NCBIfam" id="TIGR01141">
    <property type="entry name" value="hisC"/>
    <property type="match status" value="1"/>
</dbReference>
<dbReference type="PANTHER" id="PTHR43643:SF3">
    <property type="entry name" value="HISTIDINOL-PHOSPHATE AMINOTRANSFERASE"/>
    <property type="match status" value="1"/>
</dbReference>
<dbReference type="PANTHER" id="PTHR43643">
    <property type="entry name" value="HISTIDINOL-PHOSPHATE AMINOTRANSFERASE 2"/>
    <property type="match status" value="1"/>
</dbReference>
<dbReference type="Pfam" id="PF00155">
    <property type="entry name" value="Aminotran_1_2"/>
    <property type="match status" value="1"/>
</dbReference>
<dbReference type="SUPFAM" id="SSF53383">
    <property type="entry name" value="PLP-dependent transferases"/>
    <property type="match status" value="1"/>
</dbReference>